<name>SYQ_YERPY</name>
<keyword id="KW-0030">Aminoacyl-tRNA synthetase</keyword>
<keyword id="KW-0067">ATP-binding</keyword>
<keyword id="KW-0963">Cytoplasm</keyword>
<keyword id="KW-0436">Ligase</keyword>
<keyword id="KW-0547">Nucleotide-binding</keyword>
<keyword id="KW-0648">Protein biosynthesis</keyword>
<reference key="1">
    <citation type="submission" date="2008-02" db="EMBL/GenBank/DDBJ databases">
        <title>Complete sequence of Yersinia pseudotuberculosis YPIII.</title>
        <authorList>
            <consortium name="US DOE Joint Genome Institute"/>
            <person name="Copeland A."/>
            <person name="Lucas S."/>
            <person name="Lapidus A."/>
            <person name="Glavina del Rio T."/>
            <person name="Dalin E."/>
            <person name="Tice H."/>
            <person name="Bruce D."/>
            <person name="Goodwin L."/>
            <person name="Pitluck S."/>
            <person name="Munk A.C."/>
            <person name="Brettin T."/>
            <person name="Detter J.C."/>
            <person name="Han C."/>
            <person name="Tapia R."/>
            <person name="Schmutz J."/>
            <person name="Larimer F."/>
            <person name="Land M."/>
            <person name="Hauser L."/>
            <person name="Challacombe J.F."/>
            <person name="Green L."/>
            <person name="Lindler L.E."/>
            <person name="Nikolich M.P."/>
            <person name="Richardson P."/>
        </authorList>
    </citation>
    <scope>NUCLEOTIDE SEQUENCE [LARGE SCALE GENOMIC DNA]</scope>
    <source>
        <strain>YPIII</strain>
    </source>
</reference>
<organism>
    <name type="scientific">Yersinia pseudotuberculosis serotype O:3 (strain YPIII)</name>
    <dbReference type="NCBI Taxonomy" id="502800"/>
    <lineage>
        <taxon>Bacteria</taxon>
        <taxon>Pseudomonadati</taxon>
        <taxon>Pseudomonadota</taxon>
        <taxon>Gammaproteobacteria</taxon>
        <taxon>Enterobacterales</taxon>
        <taxon>Yersiniaceae</taxon>
        <taxon>Yersinia</taxon>
    </lineage>
</organism>
<proteinExistence type="inferred from homology"/>
<feature type="chain" id="PRO_1000095521" description="Glutamine--tRNA ligase">
    <location>
        <begin position="1"/>
        <end position="555"/>
    </location>
</feature>
<feature type="short sequence motif" description="'HIGH' region" evidence="1">
    <location>
        <begin position="34"/>
        <end position="44"/>
    </location>
</feature>
<feature type="short sequence motif" description="'KMSKS' region" evidence="1">
    <location>
        <begin position="268"/>
        <end position="272"/>
    </location>
</feature>
<feature type="binding site" evidence="1">
    <location>
        <begin position="35"/>
        <end position="37"/>
    </location>
    <ligand>
        <name>ATP</name>
        <dbReference type="ChEBI" id="CHEBI:30616"/>
    </ligand>
</feature>
<feature type="binding site" evidence="1">
    <location>
        <begin position="41"/>
        <end position="47"/>
    </location>
    <ligand>
        <name>ATP</name>
        <dbReference type="ChEBI" id="CHEBI:30616"/>
    </ligand>
</feature>
<feature type="binding site" evidence="1">
    <location>
        <position position="67"/>
    </location>
    <ligand>
        <name>L-glutamine</name>
        <dbReference type="ChEBI" id="CHEBI:58359"/>
    </ligand>
</feature>
<feature type="binding site" evidence="1">
    <location>
        <position position="212"/>
    </location>
    <ligand>
        <name>L-glutamine</name>
        <dbReference type="ChEBI" id="CHEBI:58359"/>
    </ligand>
</feature>
<feature type="binding site" evidence="1">
    <location>
        <position position="231"/>
    </location>
    <ligand>
        <name>ATP</name>
        <dbReference type="ChEBI" id="CHEBI:30616"/>
    </ligand>
</feature>
<feature type="binding site" evidence="1">
    <location>
        <begin position="261"/>
        <end position="262"/>
    </location>
    <ligand>
        <name>ATP</name>
        <dbReference type="ChEBI" id="CHEBI:30616"/>
    </ligand>
</feature>
<feature type="binding site" evidence="1">
    <location>
        <begin position="269"/>
        <end position="271"/>
    </location>
    <ligand>
        <name>ATP</name>
        <dbReference type="ChEBI" id="CHEBI:30616"/>
    </ligand>
</feature>
<evidence type="ECO:0000255" key="1">
    <source>
        <dbReference type="HAMAP-Rule" id="MF_00126"/>
    </source>
</evidence>
<protein>
    <recommendedName>
        <fullName evidence="1">Glutamine--tRNA ligase</fullName>
        <ecNumber evidence="1">6.1.1.18</ecNumber>
    </recommendedName>
    <alternativeName>
        <fullName evidence="1">Glutaminyl-tRNA synthetase</fullName>
        <shortName evidence="1">GlnRS</shortName>
    </alternativeName>
</protein>
<gene>
    <name evidence="1" type="primary">glnS</name>
    <name type="ordered locus">YPK_2994</name>
</gene>
<sequence>MSEAEARPSNFIRQIIDEDLASGKHTSVHTRFPPEPNGYLHIGHAKSICLNFGIAEDYQGQCNLRFDDTNPVKEDVEFVESIKRDVEWLGFTWSGDVRYSSDYFDQLYQYAVELINKGLAYVDELTPEQMREYRGTLTAPGKNSPYRDRSVEENLVLFEKMRAGGFAEGTACLRAKIDMASPFIVMRDPVLYRIKFAEHHQSGNKWCIYPMYDFTHCISDALEGITHSLCTLEFQDNRRLYDWVLDNISIDCHPRQYEFSRLNLEYTIMSKRKLNQLVTEKVVEGWDDPRMPTISGLRRRGYTAASIREFCRRIGVTKQDNNVEMMSLESCIRDDLNEHAPRAMAVLDPIKVVIENRAAGEEWLTMPNHPNNPEMGSRQVPFDSEIYIDRADFREEANKQYKRLVLGKEVRLRNAYVIKAERVEKDAEGNVTTLYCSYDAETLNKDPADGRKVKGVIHWVSVAHALPAEIRLYDRLFNVPNPAAAEDFLSTINPESLVIRQGFVEPSLADAVSDKTYQFEREGYFCADSRYSRPGALVFNRTVGLRDTWAAKATQ</sequence>
<dbReference type="EC" id="6.1.1.18" evidence="1"/>
<dbReference type="EMBL" id="CP000950">
    <property type="protein sequence ID" value="ACA69268.1"/>
    <property type="molecule type" value="Genomic_DNA"/>
</dbReference>
<dbReference type="RefSeq" id="WP_012304385.1">
    <property type="nucleotide sequence ID" value="NZ_CP009792.1"/>
</dbReference>
<dbReference type="SMR" id="B1JG85"/>
<dbReference type="KEGG" id="ypy:YPK_2994"/>
<dbReference type="PATRIC" id="fig|502800.11.peg.3716"/>
<dbReference type="GO" id="GO:0005829">
    <property type="term" value="C:cytosol"/>
    <property type="evidence" value="ECO:0007669"/>
    <property type="project" value="TreeGrafter"/>
</dbReference>
<dbReference type="GO" id="GO:0005524">
    <property type="term" value="F:ATP binding"/>
    <property type="evidence" value="ECO:0007669"/>
    <property type="project" value="UniProtKB-UniRule"/>
</dbReference>
<dbReference type="GO" id="GO:0004819">
    <property type="term" value="F:glutamine-tRNA ligase activity"/>
    <property type="evidence" value="ECO:0007669"/>
    <property type="project" value="UniProtKB-UniRule"/>
</dbReference>
<dbReference type="GO" id="GO:0006425">
    <property type="term" value="P:glutaminyl-tRNA aminoacylation"/>
    <property type="evidence" value="ECO:0007669"/>
    <property type="project" value="InterPro"/>
</dbReference>
<dbReference type="GO" id="GO:0006424">
    <property type="term" value="P:glutamyl-tRNA aminoacylation"/>
    <property type="evidence" value="ECO:0007669"/>
    <property type="project" value="UniProtKB-UniRule"/>
</dbReference>
<dbReference type="CDD" id="cd00807">
    <property type="entry name" value="GlnRS_core"/>
    <property type="match status" value="1"/>
</dbReference>
<dbReference type="FunFam" id="1.10.1160.10:FF:000001">
    <property type="entry name" value="Glutamine--tRNA ligase"/>
    <property type="match status" value="1"/>
</dbReference>
<dbReference type="FunFam" id="2.40.240.10:FF:000001">
    <property type="entry name" value="Glutamine--tRNA ligase"/>
    <property type="match status" value="1"/>
</dbReference>
<dbReference type="FunFam" id="2.40.240.10:FF:000003">
    <property type="entry name" value="Glutamine--tRNA ligase"/>
    <property type="match status" value="1"/>
</dbReference>
<dbReference type="FunFam" id="3.90.800.10:FF:000001">
    <property type="entry name" value="Glutamine--tRNA ligase"/>
    <property type="match status" value="1"/>
</dbReference>
<dbReference type="FunFam" id="3.40.50.620:FF:000037">
    <property type="entry name" value="Glutamine--tRNA ligase cytoplasmic"/>
    <property type="match status" value="1"/>
</dbReference>
<dbReference type="Gene3D" id="1.10.1160.10">
    <property type="entry name" value="Glutamyl-trna Synthetase, Domain 2"/>
    <property type="match status" value="1"/>
</dbReference>
<dbReference type="Gene3D" id="3.90.800.10">
    <property type="entry name" value="Glutamyl-tRNA Synthetase, Domain 3"/>
    <property type="match status" value="1"/>
</dbReference>
<dbReference type="Gene3D" id="3.40.50.620">
    <property type="entry name" value="HUPs"/>
    <property type="match status" value="1"/>
</dbReference>
<dbReference type="Gene3D" id="2.40.240.10">
    <property type="entry name" value="Ribosomal Protein L25, Chain P"/>
    <property type="match status" value="2"/>
</dbReference>
<dbReference type="HAMAP" id="MF_00126">
    <property type="entry name" value="Gln_tRNA_synth"/>
    <property type="match status" value="1"/>
</dbReference>
<dbReference type="InterPro" id="IPR001412">
    <property type="entry name" value="aa-tRNA-synth_I_CS"/>
</dbReference>
<dbReference type="InterPro" id="IPR004514">
    <property type="entry name" value="Gln-tRNA-synth"/>
</dbReference>
<dbReference type="InterPro" id="IPR050132">
    <property type="entry name" value="Gln/Glu-tRNA_Ligase"/>
</dbReference>
<dbReference type="InterPro" id="IPR022861">
    <property type="entry name" value="Gln_tRNA_ligase_bac"/>
</dbReference>
<dbReference type="InterPro" id="IPR000924">
    <property type="entry name" value="Glu/Gln-tRNA-synth"/>
</dbReference>
<dbReference type="InterPro" id="IPR020058">
    <property type="entry name" value="Glu/Gln-tRNA-synth_Ib_cat-dom"/>
</dbReference>
<dbReference type="InterPro" id="IPR020059">
    <property type="entry name" value="Glu/Gln-tRNA-synth_Ib_codon-bd"/>
</dbReference>
<dbReference type="InterPro" id="IPR020061">
    <property type="entry name" value="Glu_tRNA_lig_a-bdl"/>
</dbReference>
<dbReference type="InterPro" id="IPR020056">
    <property type="entry name" value="Rbsml_bL25/Gln-tRNA_synth_N"/>
</dbReference>
<dbReference type="InterPro" id="IPR011035">
    <property type="entry name" value="Ribosomal_bL25/Gln-tRNA_synth"/>
</dbReference>
<dbReference type="InterPro" id="IPR014729">
    <property type="entry name" value="Rossmann-like_a/b/a_fold"/>
</dbReference>
<dbReference type="InterPro" id="IPR049437">
    <property type="entry name" value="tRNA-synt_1c_C2"/>
</dbReference>
<dbReference type="NCBIfam" id="TIGR00440">
    <property type="entry name" value="glnS"/>
    <property type="match status" value="1"/>
</dbReference>
<dbReference type="NCBIfam" id="NF011291">
    <property type="entry name" value="PRK14703.1"/>
    <property type="match status" value="1"/>
</dbReference>
<dbReference type="PANTHER" id="PTHR43097:SF5">
    <property type="entry name" value="GLUTAMATE--TRNA LIGASE"/>
    <property type="match status" value="1"/>
</dbReference>
<dbReference type="PANTHER" id="PTHR43097">
    <property type="entry name" value="GLUTAMINE-TRNA LIGASE"/>
    <property type="match status" value="1"/>
</dbReference>
<dbReference type="Pfam" id="PF00749">
    <property type="entry name" value="tRNA-synt_1c"/>
    <property type="match status" value="1"/>
</dbReference>
<dbReference type="Pfam" id="PF03950">
    <property type="entry name" value="tRNA-synt_1c_C"/>
    <property type="match status" value="1"/>
</dbReference>
<dbReference type="Pfam" id="PF20974">
    <property type="entry name" value="tRNA-synt_1c_C2"/>
    <property type="match status" value="1"/>
</dbReference>
<dbReference type="PRINTS" id="PR00987">
    <property type="entry name" value="TRNASYNTHGLU"/>
</dbReference>
<dbReference type="SUPFAM" id="SSF52374">
    <property type="entry name" value="Nucleotidylyl transferase"/>
    <property type="match status" value="1"/>
</dbReference>
<dbReference type="SUPFAM" id="SSF50715">
    <property type="entry name" value="Ribosomal protein L25-like"/>
    <property type="match status" value="1"/>
</dbReference>
<dbReference type="PROSITE" id="PS00178">
    <property type="entry name" value="AA_TRNA_LIGASE_I"/>
    <property type="match status" value="1"/>
</dbReference>
<accession>B1JG85</accession>
<comment type="catalytic activity">
    <reaction evidence="1">
        <text>tRNA(Gln) + L-glutamine + ATP = L-glutaminyl-tRNA(Gln) + AMP + diphosphate</text>
        <dbReference type="Rhea" id="RHEA:20121"/>
        <dbReference type="Rhea" id="RHEA-COMP:9662"/>
        <dbReference type="Rhea" id="RHEA-COMP:9681"/>
        <dbReference type="ChEBI" id="CHEBI:30616"/>
        <dbReference type="ChEBI" id="CHEBI:33019"/>
        <dbReference type="ChEBI" id="CHEBI:58359"/>
        <dbReference type="ChEBI" id="CHEBI:78442"/>
        <dbReference type="ChEBI" id="CHEBI:78521"/>
        <dbReference type="ChEBI" id="CHEBI:456215"/>
        <dbReference type="EC" id="6.1.1.18"/>
    </reaction>
</comment>
<comment type="subunit">
    <text evidence="1">Monomer.</text>
</comment>
<comment type="subcellular location">
    <subcellularLocation>
        <location evidence="1">Cytoplasm</location>
    </subcellularLocation>
</comment>
<comment type="similarity">
    <text evidence="1">Belongs to the class-I aminoacyl-tRNA synthetase family.</text>
</comment>